<keyword id="KW-1003">Cell membrane</keyword>
<keyword id="KW-0963">Cytoplasm</keyword>
<keyword id="KW-0217">Developmental protein</keyword>
<keyword id="KW-0936">Ethylene signaling pathway</keyword>
<keyword id="KW-0341">Growth regulation</keyword>
<keyword id="KW-0472">Membrane</keyword>
<keyword id="KW-0539">Nucleus</keyword>
<keyword id="KW-1185">Reference proteome</keyword>
<protein>
    <recommendedName>
        <fullName evidence="6">Auxin-responsive protein SAUR76</fullName>
    </recommendedName>
    <alternativeName>
        <fullName evidence="5">Protein SMALL AUXIN UP RNA 76</fullName>
    </alternativeName>
</protein>
<gene>
    <name evidence="5" type="primary">SAUR76</name>
    <name evidence="10" type="ordered locus">At5g20820</name>
</gene>
<comment type="function">
    <text evidence="3 8">May be involved in the regulation of ethylene receptor signaling. Promotes cell expansion and plant growth (Probable). Involved in the regulation of cell elongation (PubMed:24312429).</text>
</comment>
<comment type="subcellular location">
    <subcellularLocation>
        <location evidence="3">Nucleus</location>
    </subcellularLocation>
    <subcellularLocation>
        <location evidence="3">Cytoplasm</location>
    </subcellularLocation>
    <subcellularLocation>
        <location evidence="3">Cell membrane</location>
        <topology evidence="7">Peripheral membrane protein</topology>
    </subcellularLocation>
</comment>
<comment type="tissue specificity">
    <text evidence="3">Expressed in cotyledons, hypocotyls and roots of young seedlings. Expressed in emerging lateral root, leaves, flowers, stamens and filaments.</text>
</comment>
<comment type="induction">
    <text evidence="2 3">Induced by ethylene in roots (PubMed:23134674, PubMed:24312429). Induced by auxin in roots. Down-regulated by abscisic acid (ABA) and paclobutrazol (PubMed:24312429).</text>
</comment>
<comment type="disruption phenotype">
    <text evidence="3">No visible phenotype under normal growth conditions.</text>
</comment>
<comment type="miscellaneous">
    <text evidence="3 4">Plants over-expressing SAUR76 display increased root growth and reduced number of cells in leaves leading to reduced leaf area (PubMed:24312429). Plants silencing SAUR76 exhibit increased sensitivity to ethylene, while plants over-expressing SAUR76 display reduced ethylene sensitivity. Plants over-expressing SAUR76 exhibit increased rosette diameters (PubMed:26207341).</text>
</comment>
<comment type="similarity">
    <text evidence="6">Belongs to the ARG7 family.</text>
</comment>
<comment type="caution">
    <text evidence="9">The article by Li et al was retracted by the editors after publication. Concerns were raised regarding a number of figure panels, such as partial overlap between the panels and duplication of protein gel analysis.</text>
</comment>
<feature type="chain" id="PRO_0000444007" description="Auxin-responsive protein SAUR76">
    <location>
        <begin position="1"/>
        <end position="127"/>
    </location>
</feature>
<feature type="region of interest" description="Disordered" evidence="1">
    <location>
        <begin position="20"/>
        <end position="40"/>
    </location>
</feature>
<feature type="sequence conflict" description="In Ref. 4; AAM63151." evidence="6" ref="4">
    <original>P</original>
    <variation>Q</variation>
    <location>
        <position position="29"/>
    </location>
</feature>
<feature type="sequence conflict" description="In Ref. 4; AAM63151." evidence="6" ref="4">
    <original>S</original>
    <variation>G</variation>
    <location>
        <position position="35"/>
    </location>
</feature>
<feature type="sequence conflict" description="In Ref. 4; AAM63151." evidence="6" ref="4">
    <original>T</original>
    <variation>P</variation>
    <location>
        <position position="59"/>
    </location>
</feature>
<dbReference type="EMBL" id="AF296832">
    <property type="status" value="NOT_ANNOTATED_CDS"/>
    <property type="molecule type" value="Genomic_DNA"/>
</dbReference>
<dbReference type="EMBL" id="CP002688">
    <property type="protein sequence ID" value="AED92893.1"/>
    <property type="molecule type" value="Genomic_DNA"/>
</dbReference>
<dbReference type="EMBL" id="BT024814">
    <property type="protein sequence ID" value="ABD60697.1"/>
    <property type="molecule type" value="mRNA"/>
</dbReference>
<dbReference type="EMBL" id="AY085940">
    <property type="protein sequence ID" value="AAM63151.1"/>
    <property type="molecule type" value="mRNA"/>
</dbReference>
<dbReference type="RefSeq" id="NP_197582.1">
    <property type="nucleotide sequence ID" value="NM_122089.2"/>
</dbReference>
<dbReference type="SMR" id="Q29PU2"/>
<dbReference type="FunCoup" id="Q29PU2">
    <property type="interactions" value="28"/>
</dbReference>
<dbReference type="STRING" id="3702.Q29PU2"/>
<dbReference type="PaxDb" id="3702-AT5G20820.1"/>
<dbReference type="ProteomicsDB" id="232841"/>
<dbReference type="EnsemblPlants" id="AT5G20820.1">
    <property type="protein sequence ID" value="AT5G20820.1"/>
    <property type="gene ID" value="AT5G20820"/>
</dbReference>
<dbReference type="GeneID" id="832205"/>
<dbReference type="Gramene" id="AT5G20820.1">
    <property type="protein sequence ID" value="AT5G20820.1"/>
    <property type="gene ID" value="AT5G20820"/>
</dbReference>
<dbReference type="KEGG" id="ath:AT5G20820"/>
<dbReference type="Araport" id="AT5G20820"/>
<dbReference type="TAIR" id="AT5G20820">
    <property type="gene designation" value="SAUR76"/>
</dbReference>
<dbReference type="eggNOG" id="ENOG502S116">
    <property type="taxonomic scope" value="Eukaryota"/>
</dbReference>
<dbReference type="HOGENOM" id="CLU_098106_6_2_1"/>
<dbReference type="InParanoid" id="Q29PU2"/>
<dbReference type="OMA" id="DSINVAC"/>
<dbReference type="PhylomeDB" id="Q29PU2"/>
<dbReference type="PRO" id="PR:Q29PU2"/>
<dbReference type="Proteomes" id="UP000006548">
    <property type="component" value="Chromosome 5"/>
</dbReference>
<dbReference type="ExpressionAtlas" id="Q29PU2">
    <property type="expression patterns" value="baseline and differential"/>
</dbReference>
<dbReference type="GO" id="GO:0005737">
    <property type="term" value="C:cytoplasm"/>
    <property type="evidence" value="ECO:0007669"/>
    <property type="project" value="UniProtKB-SubCell"/>
</dbReference>
<dbReference type="GO" id="GO:0005634">
    <property type="term" value="C:nucleus"/>
    <property type="evidence" value="ECO:0007669"/>
    <property type="project" value="UniProtKB-SubCell"/>
</dbReference>
<dbReference type="GO" id="GO:0005886">
    <property type="term" value="C:plasma membrane"/>
    <property type="evidence" value="ECO:0007669"/>
    <property type="project" value="UniProtKB-SubCell"/>
</dbReference>
<dbReference type="GO" id="GO:0009873">
    <property type="term" value="P:ethylene-activated signaling pathway"/>
    <property type="evidence" value="ECO:0007669"/>
    <property type="project" value="UniProtKB-KW"/>
</dbReference>
<dbReference type="GO" id="GO:0009733">
    <property type="term" value="P:response to auxin"/>
    <property type="evidence" value="ECO:0007669"/>
    <property type="project" value="InterPro"/>
</dbReference>
<dbReference type="InterPro" id="IPR003676">
    <property type="entry name" value="SAUR_fam"/>
</dbReference>
<dbReference type="PANTHER" id="PTHR35296">
    <property type="entry name" value="EXPRESSED PROTEIN"/>
    <property type="match status" value="1"/>
</dbReference>
<dbReference type="PANTHER" id="PTHR35296:SF8">
    <property type="entry name" value="SMALL AUXIN-UP RNA-RELATED"/>
    <property type="match status" value="1"/>
</dbReference>
<dbReference type="Pfam" id="PF02519">
    <property type="entry name" value="Auxin_inducible"/>
    <property type="match status" value="1"/>
</dbReference>
<reference key="1">
    <citation type="journal article" date="2000" name="Nature">
        <title>Sequence and analysis of chromosome 5 of the plant Arabidopsis thaliana.</title>
        <authorList>
            <person name="Tabata S."/>
            <person name="Kaneko T."/>
            <person name="Nakamura Y."/>
            <person name="Kotani H."/>
            <person name="Kato T."/>
            <person name="Asamizu E."/>
            <person name="Miyajima N."/>
            <person name="Sasamoto S."/>
            <person name="Kimura T."/>
            <person name="Hosouchi T."/>
            <person name="Kawashima K."/>
            <person name="Kohara M."/>
            <person name="Matsumoto M."/>
            <person name="Matsuno A."/>
            <person name="Muraki A."/>
            <person name="Nakayama S."/>
            <person name="Nakazaki N."/>
            <person name="Naruo K."/>
            <person name="Okumura S."/>
            <person name="Shinpo S."/>
            <person name="Takeuchi C."/>
            <person name="Wada T."/>
            <person name="Watanabe A."/>
            <person name="Yamada M."/>
            <person name="Yasuda M."/>
            <person name="Sato S."/>
            <person name="de la Bastide M."/>
            <person name="Huang E."/>
            <person name="Spiegel L."/>
            <person name="Gnoj L."/>
            <person name="O'Shaughnessy A."/>
            <person name="Preston R."/>
            <person name="Habermann K."/>
            <person name="Murray J."/>
            <person name="Johnson D."/>
            <person name="Rohlfing T."/>
            <person name="Nelson J."/>
            <person name="Stoneking T."/>
            <person name="Pepin K."/>
            <person name="Spieth J."/>
            <person name="Sekhon M."/>
            <person name="Armstrong J."/>
            <person name="Becker M."/>
            <person name="Belter E."/>
            <person name="Cordum H."/>
            <person name="Cordes M."/>
            <person name="Courtney L."/>
            <person name="Courtney W."/>
            <person name="Dante M."/>
            <person name="Du H."/>
            <person name="Edwards J."/>
            <person name="Fryman J."/>
            <person name="Haakensen B."/>
            <person name="Lamar E."/>
            <person name="Latreille P."/>
            <person name="Leonard S."/>
            <person name="Meyer R."/>
            <person name="Mulvaney E."/>
            <person name="Ozersky P."/>
            <person name="Riley A."/>
            <person name="Strowmatt C."/>
            <person name="Wagner-McPherson C."/>
            <person name="Wollam A."/>
            <person name="Yoakum M."/>
            <person name="Bell M."/>
            <person name="Dedhia N."/>
            <person name="Parnell L."/>
            <person name="Shah R."/>
            <person name="Rodriguez M."/>
            <person name="Hoon See L."/>
            <person name="Vil D."/>
            <person name="Baker J."/>
            <person name="Kirchoff K."/>
            <person name="Toth K."/>
            <person name="King L."/>
            <person name="Bahret A."/>
            <person name="Miller B."/>
            <person name="Marra M.A."/>
            <person name="Martienssen R."/>
            <person name="McCombie W.R."/>
            <person name="Wilson R.K."/>
            <person name="Murphy G."/>
            <person name="Bancroft I."/>
            <person name="Volckaert G."/>
            <person name="Wambutt R."/>
            <person name="Duesterhoeft A."/>
            <person name="Stiekema W."/>
            <person name="Pohl T."/>
            <person name="Entian K.-D."/>
            <person name="Terryn N."/>
            <person name="Hartley N."/>
            <person name="Bent E."/>
            <person name="Johnson S."/>
            <person name="Langham S.-A."/>
            <person name="McCullagh B."/>
            <person name="Robben J."/>
            <person name="Grymonprez B."/>
            <person name="Zimmermann W."/>
            <person name="Ramsperger U."/>
            <person name="Wedler H."/>
            <person name="Balke K."/>
            <person name="Wedler E."/>
            <person name="Peters S."/>
            <person name="van Staveren M."/>
            <person name="Dirkse W."/>
            <person name="Mooijman P."/>
            <person name="Klein Lankhorst R."/>
            <person name="Weitzenegger T."/>
            <person name="Bothe G."/>
            <person name="Rose M."/>
            <person name="Hauf J."/>
            <person name="Berneiser S."/>
            <person name="Hempel S."/>
            <person name="Feldpausch M."/>
            <person name="Lamberth S."/>
            <person name="Villarroel R."/>
            <person name="Gielen J."/>
            <person name="Ardiles W."/>
            <person name="Bents O."/>
            <person name="Lemcke K."/>
            <person name="Kolesov G."/>
            <person name="Mayer K.F.X."/>
            <person name="Rudd S."/>
            <person name="Schoof H."/>
            <person name="Schueller C."/>
            <person name="Zaccaria P."/>
            <person name="Mewes H.-W."/>
            <person name="Bevan M."/>
            <person name="Fransz P.F."/>
        </authorList>
    </citation>
    <scope>NUCLEOTIDE SEQUENCE [LARGE SCALE GENOMIC DNA]</scope>
    <source>
        <strain>cv. Columbia</strain>
    </source>
</reference>
<reference key="2">
    <citation type="journal article" date="2017" name="Plant J.">
        <title>Araport11: a complete reannotation of the Arabidopsis thaliana reference genome.</title>
        <authorList>
            <person name="Cheng C.Y."/>
            <person name="Krishnakumar V."/>
            <person name="Chan A.P."/>
            <person name="Thibaud-Nissen F."/>
            <person name="Schobel S."/>
            <person name="Town C.D."/>
        </authorList>
    </citation>
    <scope>GENOME REANNOTATION</scope>
    <source>
        <strain>cv. Columbia</strain>
    </source>
</reference>
<reference key="3">
    <citation type="submission" date="2006-03" db="EMBL/GenBank/DDBJ databases">
        <title>Arabidopsis ORF clones.</title>
        <authorList>
            <person name="Kim C.J."/>
            <person name="Chen H."/>
            <person name="Shinn P."/>
            <person name="Ecker J.R."/>
        </authorList>
    </citation>
    <scope>NUCLEOTIDE SEQUENCE [LARGE SCALE MRNA]</scope>
    <source>
        <strain>cv. Columbia</strain>
    </source>
</reference>
<reference key="4">
    <citation type="submission" date="2002-03" db="EMBL/GenBank/DDBJ databases">
        <title>Full-length cDNA from Arabidopsis thaliana.</title>
        <authorList>
            <person name="Brover V.V."/>
            <person name="Troukhan M.E."/>
            <person name="Alexandrov N.A."/>
            <person name="Lu Y.-P."/>
            <person name="Flavell R.B."/>
            <person name="Feldmann K.A."/>
        </authorList>
    </citation>
    <scope>NUCLEOTIDE SEQUENCE [LARGE SCALE MRNA]</scope>
</reference>
<reference key="5">
    <citation type="journal article" date="2012" name="BMC Plant Biol.">
        <title>Identification of genes involved in the ACC-mediated control of root cell elongation in Arabidopsis thaliana.</title>
        <authorList>
            <person name="Markakis M.N."/>
            <person name="De Cnodder T."/>
            <person name="Lewandowski M."/>
            <person name="Simon D."/>
            <person name="Boron A."/>
            <person name="Balcerowicz D."/>
            <person name="Doubbo T."/>
            <person name="Taconnat L."/>
            <person name="Renou J.P."/>
            <person name="Hoefte H."/>
            <person name="Verbelen J.P."/>
            <person name="Vissenberg K."/>
        </authorList>
    </citation>
    <scope>INDUCTION BY ETHYLENE</scope>
</reference>
<reference key="6">
    <citation type="journal article" date="2013" name="PLoS ONE">
        <title>Characterization of a small auxin-up RNA (SAUR)-like gene involved in Arabidopsis thaliana development.</title>
        <authorList>
            <person name="Markakis M.N."/>
            <person name="Boron A.K."/>
            <person name="Van Loock B."/>
            <person name="Saini K."/>
            <person name="Cirera S."/>
            <person name="Verbelen J.P."/>
            <person name="Vissenberg K."/>
        </authorList>
    </citation>
    <scope>FUNCTION</scope>
    <scope>SUBCELLULAR LOCATION</scope>
    <scope>TISSUE SPECIFICITY</scope>
    <scope>INDUCTION</scope>
    <scope>DISRUPTION PHENOTYPE</scope>
</reference>
<reference key="7">
    <citation type="journal article" date="2015" name="Sci. Rep.">
        <title>Three SAUR proteins SAUR76, SAUR77 and SAUR78 promote plant growth in Arabidopsis.</title>
        <authorList>
            <person name="Li Z.G."/>
            <person name="Chen H.W."/>
            <person name="Li Q.T."/>
            <person name="Tao J.J."/>
            <person name="Bian X.H."/>
            <person name="Ma B."/>
            <person name="Zhang W.K."/>
            <person name="Chen S.Y."/>
            <person name="Zhang J.S."/>
        </authorList>
    </citation>
    <scope>FUNCTION</scope>
    <scope>RETRACTED PAPER</scope>
</reference>
<reference key="8">
    <citation type="journal article" date="2022" name="Sci. Rep.">
        <authorList>
            <person name="Li Z.G."/>
            <person name="Chen H.W."/>
            <person name="Li Q.T."/>
            <person name="Tao J.J."/>
            <person name="Bian X.H."/>
            <person name="Ma B."/>
            <person name="Zhang W.K."/>
            <person name="Chen S.Y."/>
            <person name="Zhang J.S."/>
        </authorList>
    </citation>
    <scope>RETRACTION NOTICE OF PUBMED:26207341</scope>
</reference>
<name>SAU76_ARATH</name>
<accession>Q29PU2</accession>
<accession>Q8LDL3</accession>
<organism>
    <name type="scientific">Arabidopsis thaliana</name>
    <name type="common">Mouse-ear cress</name>
    <dbReference type="NCBI Taxonomy" id="3702"/>
    <lineage>
        <taxon>Eukaryota</taxon>
        <taxon>Viridiplantae</taxon>
        <taxon>Streptophyta</taxon>
        <taxon>Embryophyta</taxon>
        <taxon>Tracheophyta</taxon>
        <taxon>Spermatophyta</taxon>
        <taxon>Magnoliopsida</taxon>
        <taxon>eudicotyledons</taxon>
        <taxon>Gunneridae</taxon>
        <taxon>Pentapetalae</taxon>
        <taxon>rosids</taxon>
        <taxon>malvids</taxon>
        <taxon>Brassicales</taxon>
        <taxon>Brassicaceae</taxon>
        <taxon>Camelineae</taxon>
        <taxon>Arabidopsis</taxon>
    </lineage>
</organism>
<proteinExistence type="evidence at transcript level"/>
<evidence type="ECO:0000256" key="1">
    <source>
        <dbReference type="SAM" id="MobiDB-lite"/>
    </source>
</evidence>
<evidence type="ECO:0000269" key="2">
    <source>
    </source>
</evidence>
<evidence type="ECO:0000269" key="3">
    <source>
    </source>
</evidence>
<evidence type="ECO:0000269" key="4">
    <source>
    </source>
</evidence>
<evidence type="ECO:0000303" key="5">
    <source>
    </source>
</evidence>
<evidence type="ECO:0000305" key="6"/>
<evidence type="ECO:0000305" key="7">
    <source>
    </source>
</evidence>
<evidence type="ECO:0000305" key="8">
    <source>
    </source>
</evidence>
<evidence type="ECO:0000305" key="9">
    <source>
    </source>
</evidence>
<evidence type="ECO:0000312" key="10">
    <source>
        <dbReference type="Araport" id="AT5G20820"/>
    </source>
</evidence>
<sequence>MAKGGNKLMKLKSVLKKLNSFNTKPNQPPAQTNHSRSSAVSAFPSEDLQTVYVGRTRRTYHVSSDVVSHPLFQQLAAVDGGCGSEDGSISVSCEVVLFEHLLWMLENADADESRPESVYELVEFYAC</sequence>